<sequence length="383" mass="42239">MGSIGAASMEFCFDVFKELKVHHANDNMLYSPFAILSTLAMVFLGAKDSTRTQINKVVHFDKLPGFGDSIEAQCGTSVNVHSSLRDILNQITKQNDAYSFSLASRLYAQETYTVVPEYLQCVKELYRGGLESVNFQTAADQARGLINAWVESQTNGIIRNILQPSSVDSQTAMVLVNAIAFKGLWEKAFKAEDTQTIPFRVTEQESKPVQMMYQIGSFKVASMASEKMKILELPFASGTMSMLVLLPDDVSGLEQLESIISFEKLTEWTSSSIMEERKVKVYLPRMKMEEKYNLTSLLMAMGITDLFSSSANLSGISSVGSLKISQAVHAAHAEINEAGRDVVGSAEAGVDATEEFRADHPFLFCVKHIETNAILLFGRCVSP</sequence>
<accession>P19104</accession>
<organism>
    <name type="scientific">Coturnix japonica</name>
    <name type="common">Japanese quail</name>
    <name type="synonym">Coturnix coturnix japonica</name>
    <dbReference type="NCBI Taxonomy" id="93934"/>
    <lineage>
        <taxon>Eukaryota</taxon>
        <taxon>Metazoa</taxon>
        <taxon>Chordata</taxon>
        <taxon>Craniata</taxon>
        <taxon>Vertebrata</taxon>
        <taxon>Euteleostomi</taxon>
        <taxon>Archelosauria</taxon>
        <taxon>Archosauria</taxon>
        <taxon>Dinosauria</taxon>
        <taxon>Saurischia</taxon>
        <taxon>Theropoda</taxon>
        <taxon>Coelurosauria</taxon>
        <taxon>Aves</taxon>
        <taxon>Neognathae</taxon>
        <taxon>Galloanserae</taxon>
        <taxon>Galliformes</taxon>
        <taxon>Phasianidae</taxon>
        <taxon>Perdicinae</taxon>
        <taxon>Coturnix</taxon>
    </lineage>
</organism>
<evidence type="ECO:0000250" key="1"/>
<evidence type="ECO:0000255" key="2"/>
<evidence type="ECO:0000305" key="3"/>
<gene>
    <name type="primary">SERPINB14</name>
</gene>
<reference key="1">
    <citation type="journal article" date="1990" name="Nucleic Acids Res.">
        <title>The sequence of Japanese quail ovalbumin cDNA.</title>
        <authorList>
            <person name="Mucha J."/>
            <person name="Klaudiny J."/>
            <person name="Klaudinyova V."/>
            <person name="Hanes J."/>
            <person name="Simuth J."/>
        </authorList>
    </citation>
    <scope>NUCLEOTIDE SEQUENCE [MRNA]</scope>
    <source>
        <tissue>Oviduct</tissue>
    </source>
</reference>
<name>OVAL_COTJA</name>
<feature type="initiator methionine" description="Removed" evidence="1">
    <location>
        <position position="1"/>
    </location>
</feature>
<feature type="chain" id="PRO_0000094128" description="Ovalbumin">
    <location>
        <begin position="2"/>
        <end position="383"/>
    </location>
</feature>
<feature type="signal peptide" description="Not cleaved" evidence="1">
    <location>
        <begin position="22"/>
        <end position="48"/>
    </location>
</feature>
<feature type="site" description="Reactive bond homolog">
    <location>
        <begin position="353"/>
        <end position="354"/>
    </location>
</feature>
<feature type="modified residue" description="N-acetylglycine" evidence="1">
    <location>
        <position position="2"/>
    </location>
</feature>
<feature type="modified residue" description="Phosphoserine" evidence="1">
    <location>
        <position position="69"/>
    </location>
</feature>
<feature type="modified residue" description="Phosphoserine" evidence="1">
    <location>
        <position position="345"/>
    </location>
</feature>
<feature type="glycosylation site" description="N-linked (GlcNAc...) asparagine" evidence="2">
    <location>
        <position position="293"/>
    </location>
</feature>
<feature type="glycosylation site" description="N-linked (GlcNAc...) asparagine" evidence="2">
    <location>
        <position position="312"/>
    </location>
</feature>
<feature type="disulfide bond" evidence="1">
    <location>
        <begin position="74"/>
        <end position="121"/>
    </location>
</feature>
<dbReference type="EMBL" id="X53964">
    <property type="protein sequence ID" value="CAA37916.1"/>
    <property type="molecule type" value="mRNA"/>
</dbReference>
<dbReference type="PIR" id="S11433">
    <property type="entry name" value="S11433"/>
</dbReference>
<dbReference type="SMR" id="P19104"/>
<dbReference type="MEROPS" id="I04.958"/>
<dbReference type="GlyCosmos" id="P19104">
    <property type="glycosylation" value="2 sites, No reported glycans"/>
</dbReference>
<dbReference type="Proteomes" id="UP000694412">
    <property type="component" value="Unplaced"/>
</dbReference>
<dbReference type="GO" id="GO:0005615">
    <property type="term" value="C:extracellular space"/>
    <property type="evidence" value="ECO:0007669"/>
    <property type="project" value="InterPro"/>
</dbReference>
<dbReference type="GO" id="GO:0004867">
    <property type="term" value="F:serine-type endopeptidase inhibitor activity"/>
    <property type="evidence" value="ECO:0007669"/>
    <property type="project" value="InterPro"/>
</dbReference>
<dbReference type="CDD" id="cd02059">
    <property type="entry name" value="serpinB14_OVA"/>
    <property type="match status" value="1"/>
</dbReference>
<dbReference type="FunFam" id="2.30.39.10:FF:000001">
    <property type="entry name" value="Serpin family B member 2"/>
    <property type="match status" value="1"/>
</dbReference>
<dbReference type="Gene3D" id="2.30.39.10">
    <property type="entry name" value="Alpha-1-antitrypsin, domain 1"/>
    <property type="match status" value="1"/>
</dbReference>
<dbReference type="Gene3D" id="3.30.497.10">
    <property type="entry name" value="Antithrombin, subunit I, domain 2"/>
    <property type="match status" value="1"/>
</dbReference>
<dbReference type="InterPro" id="IPR023795">
    <property type="entry name" value="Serpin_CS"/>
</dbReference>
<dbReference type="InterPro" id="IPR023796">
    <property type="entry name" value="Serpin_dom"/>
</dbReference>
<dbReference type="InterPro" id="IPR000215">
    <property type="entry name" value="Serpin_fam"/>
</dbReference>
<dbReference type="InterPro" id="IPR036186">
    <property type="entry name" value="Serpin_sf"/>
</dbReference>
<dbReference type="InterPro" id="IPR042178">
    <property type="entry name" value="Serpin_sf_1"/>
</dbReference>
<dbReference type="InterPro" id="IPR042185">
    <property type="entry name" value="Serpin_sf_2"/>
</dbReference>
<dbReference type="PANTHER" id="PTHR11461">
    <property type="entry name" value="SERINE PROTEASE INHIBITOR, SERPIN"/>
    <property type="match status" value="1"/>
</dbReference>
<dbReference type="PANTHER" id="PTHR11461:SF186">
    <property type="entry name" value="SERPIN B4"/>
    <property type="match status" value="1"/>
</dbReference>
<dbReference type="Pfam" id="PF00079">
    <property type="entry name" value="Serpin"/>
    <property type="match status" value="1"/>
</dbReference>
<dbReference type="SMART" id="SM00093">
    <property type="entry name" value="SERPIN"/>
    <property type="match status" value="1"/>
</dbReference>
<dbReference type="SUPFAM" id="SSF56574">
    <property type="entry name" value="Serpins"/>
    <property type="match status" value="1"/>
</dbReference>
<dbReference type="PROSITE" id="PS00284">
    <property type="entry name" value="SERPIN"/>
    <property type="match status" value="1"/>
</dbReference>
<comment type="function">
    <text evidence="1">Storage protein of egg white. Lack protease inhibitory activity (By similarity).</text>
</comment>
<comment type="subcellular location">
    <subcellularLocation>
        <location evidence="1">Secreted</location>
    </subcellularLocation>
</comment>
<comment type="tissue specificity">
    <text>Major protein of egg white.</text>
</comment>
<comment type="PTM">
    <text evidence="1">The signal sequence is not cleaved. The functional signal for membrane translocation of ovalbumin becomes accessible when the nascent chain is 50 to 60 residues long. The hydrophobic sequence which lies between residues 27 and 43 folds back on the preceding residues to form an amphipathic hairpin structure which is the signal element recognized by the membrane (By similarity).</text>
</comment>
<comment type="similarity">
    <text evidence="3">Belongs to the serpin family. Ov-serpin subfamily.</text>
</comment>
<keyword id="KW-0007">Acetylation</keyword>
<keyword id="KW-1015">Disulfide bond</keyword>
<keyword id="KW-0325">Glycoprotein</keyword>
<keyword id="KW-0597">Phosphoprotein</keyword>
<keyword id="KW-1185">Reference proteome</keyword>
<keyword id="KW-0964">Secreted</keyword>
<keyword id="KW-0732">Signal</keyword>
<protein>
    <recommendedName>
        <fullName>Ovalbumin</fullName>
    </recommendedName>
    <alternativeName>
        <fullName>Egg albumin</fullName>
    </alternativeName>
</protein>
<proteinExistence type="evidence at transcript level"/>